<keyword id="KW-0472">Membrane</keyword>
<keyword id="KW-0496">Mitochondrion</keyword>
<keyword id="KW-1185">Reference proteome</keyword>
<keyword id="KW-0809">Transit peptide</keyword>
<keyword id="KW-0812">Transmembrane</keyword>
<keyword id="KW-1133">Transmembrane helix</keyword>
<gene>
    <name type="primary">GEP7</name>
    <name type="ordered locus">ZYRO0C04972g</name>
</gene>
<feature type="transit peptide" description="Mitochondrion" evidence="2">
    <location>
        <begin position="1"/>
        <end position="15"/>
    </location>
</feature>
<feature type="chain" id="PRO_0000399745" description="Genetic interactor of prohibitin 7, mitochondrial">
    <location>
        <begin position="16"/>
        <end position="258"/>
    </location>
</feature>
<feature type="transmembrane region" description="Helical" evidence="2">
    <location>
        <begin position="221"/>
        <end position="238"/>
    </location>
</feature>
<proteinExistence type="inferred from homology"/>
<accession>C5DT30</accession>
<organism>
    <name type="scientific">Zygosaccharomyces rouxii (strain ATCC 2623 / CBS 732 / NBRC 1130 / NCYC 568 / NRRL Y-229)</name>
    <dbReference type="NCBI Taxonomy" id="559307"/>
    <lineage>
        <taxon>Eukaryota</taxon>
        <taxon>Fungi</taxon>
        <taxon>Dikarya</taxon>
        <taxon>Ascomycota</taxon>
        <taxon>Saccharomycotina</taxon>
        <taxon>Saccharomycetes</taxon>
        <taxon>Saccharomycetales</taxon>
        <taxon>Saccharomycetaceae</taxon>
        <taxon>Zygosaccharomyces</taxon>
    </lineage>
</organism>
<evidence type="ECO:0000250" key="1"/>
<evidence type="ECO:0000255" key="2"/>
<evidence type="ECO:0000305" key="3"/>
<protein>
    <recommendedName>
        <fullName>Genetic interactor of prohibitin 7, mitochondrial</fullName>
    </recommendedName>
</protein>
<reference key="1">
    <citation type="journal article" date="2009" name="Genome Res.">
        <title>Comparative genomics of protoploid Saccharomycetaceae.</title>
        <authorList>
            <consortium name="The Genolevures Consortium"/>
            <person name="Souciet J.-L."/>
            <person name="Dujon B."/>
            <person name="Gaillardin C."/>
            <person name="Johnston M."/>
            <person name="Baret P.V."/>
            <person name="Cliften P."/>
            <person name="Sherman D.J."/>
            <person name="Weissenbach J."/>
            <person name="Westhof E."/>
            <person name="Wincker P."/>
            <person name="Jubin C."/>
            <person name="Poulain J."/>
            <person name="Barbe V."/>
            <person name="Segurens B."/>
            <person name="Artiguenave F."/>
            <person name="Anthouard V."/>
            <person name="Vacherie B."/>
            <person name="Val M.-E."/>
            <person name="Fulton R.S."/>
            <person name="Minx P."/>
            <person name="Wilson R."/>
            <person name="Durrens P."/>
            <person name="Jean G."/>
            <person name="Marck C."/>
            <person name="Martin T."/>
            <person name="Nikolski M."/>
            <person name="Rolland T."/>
            <person name="Seret M.-L."/>
            <person name="Casaregola S."/>
            <person name="Despons L."/>
            <person name="Fairhead C."/>
            <person name="Fischer G."/>
            <person name="Lafontaine I."/>
            <person name="Leh V."/>
            <person name="Lemaire M."/>
            <person name="de Montigny J."/>
            <person name="Neuveglise C."/>
            <person name="Thierry A."/>
            <person name="Blanc-Lenfle I."/>
            <person name="Bleykasten C."/>
            <person name="Diffels J."/>
            <person name="Fritsch E."/>
            <person name="Frangeul L."/>
            <person name="Goeffon A."/>
            <person name="Jauniaux N."/>
            <person name="Kachouri-Lafond R."/>
            <person name="Payen C."/>
            <person name="Potier S."/>
            <person name="Pribylova L."/>
            <person name="Ozanne C."/>
            <person name="Richard G.-F."/>
            <person name="Sacerdot C."/>
            <person name="Straub M.-L."/>
            <person name="Talla E."/>
        </authorList>
    </citation>
    <scope>NUCLEOTIDE SEQUENCE [LARGE SCALE GENOMIC DNA]</scope>
    <source>
        <strain>ATCC 2623 / CBS 732 / BCRC 21506 / NBRC 1130 / NCYC 568 / NRRL Y-229</strain>
    </source>
</reference>
<comment type="function">
    <text evidence="1">Involved in respiratory growth and required for cell survival in the absence of prohibitins.</text>
</comment>
<comment type="subcellular location">
    <subcellularLocation>
        <location evidence="1">Mitochondrion membrane</location>
        <topology evidence="1">Single-pass membrane protein</topology>
    </subcellularLocation>
</comment>
<comment type="similarity">
    <text evidence="3">Belongs to the GEP7 family.</text>
</comment>
<name>GEP7_ZYGRC</name>
<sequence length="258" mass="29749">MSQYRFPIRILTRFYTQASSRLPPKSLLIKQADRIRRSKDGQADGSKLMVSSLKDIASMFQANAETPEDEEREILNQQNYLRQQIESGELERLLQDKFNLDESISLMSTNLLVQQFPKLNAQQVELIQEAVSMDSNKHWNEIPQYMKQLQFYFAFGSHGPRLSIPFNSREKPLDFAFKIPSPVTTDGQTKIHKLKPSHLVNLHTITDQRSKIFQTTKLDPATRCILWSAILVSIVFGVQEWRLQQDPQAKITVLSNSV</sequence>
<dbReference type="EMBL" id="CU928175">
    <property type="protein sequence ID" value="CAR26941.1"/>
    <property type="molecule type" value="Genomic_DNA"/>
</dbReference>
<dbReference type="RefSeq" id="XP_002495874.1">
    <property type="nucleotide sequence ID" value="XM_002495829.1"/>
</dbReference>
<dbReference type="SMR" id="C5DT30"/>
<dbReference type="FunCoup" id="C5DT30">
    <property type="interactions" value="21"/>
</dbReference>
<dbReference type="GeneID" id="8203070"/>
<dbReference type="KEGG" id="zro:ZYRO0C04972g"/>
<dbReference type="HOGENOM" id="CLU_094335_0_0_1"/>
<dbReference type="InParanoid" id="C5DT30"/>
<dbReference type="Proteomes" id="UP000008536">
    <property type="component" value="Chromosome C"/>
</dbReference>
<dbReference type="GO" id="GO:0031966">
    <property type="term" value="C:mitochondrial membrane"/>
    <property type="evidence" value="ECO:0007669"/>
    <property type="project" value="UniProtKB-SubCell"/>
</dbReference>